<evidence type="ECO:0000305" key="1"/>
<reference key="1">
    <citation type="journal article" date="2005" name="PLoS Biol.">
        <title>The genome sequence of Rickettsia felis identifies the first putative conjugative plasmid in an obligate intracellular parasite.</title>
        <authorList>
            <person name="Ogata H."/>
            <person name="Renesto P."/>
            <person name="Audic S."/>
            <person name="Robert C."/>
            <person name="Blanc G."/>
            <person name="Fournier P.-E."/>
            <person name="Parinello H."/>
            <person name="Claverie J.-M."/>
            <person name="Raoult D."/>
        </authorList>
    </citation>
    <scope>NUCLEOTIDE SEQUENCE [LARGE SCALE GENOMIC DNA]</scope>
    <source>
        <strain>ATCC VR-1525 / URRWXCal2</strain>
    </source>
</reference>
<name>SCO21_RICFE</name>
<gene>
    <name type="ordered locus">RF_0043</name>
</gene>
<dbReference type="EMBL" id="CP000053">
    <property type="protein sequence ID" value="AAY60894.1"/>
    <property type="molecule type" value="Genomic_DNA"/>
</dbReference>
<dbReference type="SMR" id="Q4UNH4"/>
<dbReference type="STRING" id="315456.RF_0043"/>
<dbReference type="KEGG" id="rfe:RF_0043"/>
<dbReference type="eggNOG" id="COG1999">
    <property type="taxonomic scope" value="Bacteria"/>
</dbReference>
<dbReference type="HOGENOM" id="CLU_050131_6_0_5"/>
<dbReference type="OrthoDB" id="9790194at2"/>
<dbReference type="Proteomes" id="UP000008548">
    <property type="component" value="Chromosome"/>
</dbReference>
<dbReference type="CDD" id="cd02968">
    <property type="entry name" value="SCO"/>
    <property type="match status" value="1"/>
</dbReference>
<dbReference type="Gene3D" id="3.40.30.10">
    <property type="entry name" value="Glutaredoxin"/>
    <property type="match status" value="1"/>
</dbReference>
<dbReference type="InterPro" id="IPR003782">
    <property type="entry name" value="SCO1/SenC"/>
</dbReference>
<dbReference type="InterPro" id="IPR036249">
    <property type="entry name" value="Thioredoxin-like_sf"/>
</dbReference>
<dbReference type="PANTHER" id="PTHR12151">
    <property type="entry name" value="ELECTRON TRANSPORT PROTIN SCO1/SENC FAMILY MEMBER"/>
    <property type="match status" value="1"/>
</dbReference>
<dbReference type="PANTHER" id="PTHR12151:SF25">
    <property type="entry name" value="LINALOOL DEHYDRATASE_ISOMERASE DOMAIN-CONTAINING PROTEIN"/>
    <property type="match status" value="1"/>
</dbReference>
<dbReference type="Pfam" id="PF02630">
    <property type="entry name" value="SCO1-SenC"/>
    <property type="match status" value="1"/>
</dbReference>
<dbReference type="SUPFAM" id="SSF52833">
    <property type="entry name" value="Thioredoxin-like"/>
    <property type="match status" value="1"/>
</dbReference>
<organism>
    <name type="scientific">Rickettsia felis (strain ATCC VR-1525 / URRWXCal2)</name>
    <name type="common">Rickettsia azadi</name>
    <dbReference type="NCBI Taxonomy" id="315456"/>
    <lineage>
        <taxon>Bacteria</taxon>
        <taxon>Pseudomonadati</taxon>
        <taxon>Pseudomonadota</taxon>
        <taxon>Alphaproteobacteria</taxon>
        <taxon>Rickettsiales</taxon>
        <taxon>Rickettsiaceae</taxon>
        <taxon>Rickettsieae</taxon>
        <taxon>Rickettsia</taxon>
        <taxon>spotted fever group</taxon>
    </lineage>
</organism>
<accession>Q4UNH4</accession>
<comment type="similarity">
    <text evidence="1">Belongs to the SCO1/2 family.</text>
</comment>
<proteinExistence type="inferred from homology"/>
<protein>
    <recommendedName>
        <fullName>SCO2-like protein RF_0043</fullName>
    </recommendedName>
</protein>
<feature type="chain" id="PRO_0000280795" description="SCO2-like protein RF_0043">
    <location>
        <begin position="1"/>
        <end position="198"/>
    </location>
</feature>
<sequence length="198" mass="22865">MRNNKNQMYIIKIFIALAMITGIIFLCLFYSSLTPSKLKIGAKTSNMDDSPKIKFTLIDQEGKKFDSTHLQGHLSLIYFGTTYSLYDNQALKRVEDIIKILKKENIVVQVVFITLDPQHDTSEVLKKYLEKIDDNFIGLTGRVQDIEQLADQFKVFYTSKIFDVKTNEYELQHSNFVYLISSQGKFLKHYCLGLPKNG</sequence>